<evidence type="ECO:0000255" key="1">
    <source>
        <dbReference type="HAMAP-Rule" id="MF_01281"/>
    </source>
</evidence>
<sequence length="431" mass="48364">MKILIKNVDVIYTADSNRSIIKNGYIIIQDNKIKEINDMDNLVYQSNDFDDVISGKGKMALPGLVNAHTHSAMTLLRGFADDMPLHKWLQEKIWPFEKTLIPEDIYWGAKLAILEMIKTGTTTFADMYFEMGQVAKVVEEGGLRAVLSQGLIEANDGEEGLNRALKFCLEWNNRADGRILTMLAPHAPYTCSPDFFRRVVDLSQEYNLGIHTHIAETKEEFQQIREKYDCTPLQYLEKTGALKRPVLAAHCIYITEEDMDLMAQKPIGVAYNPQSNMKLGSGIAPVTRMLSKGIKVGIGTDGTSSNNNLDLIEEARSGSFLQKVNDLDSTALPVDTVLKMLTVNGAKILGFDKLGVLKEGYLADIILIGLNESTFYYPHYNNLSNLFYAGSGNDVTTVIVNGRVIMKDREVLTINEEEVYYKIEEIARRKL</sequence>
<organism>
    <name type="scientific">Halothermothrix orenii (strain H 168 / OCM 544 / DSM 9562)</name>
    <dbReference type="NCBI Taxonomy" id="373903"/>
    <lineage>
        <taxon>Bacteria</taxon>
        <taxon>Bacillati</taxon>
        <taxon>Bacillota</taxon>
        <taxon>Clostridia</taxon>
        <taxon>Halanaerobiales</taxon>
        <taxon>Halothermotrichaceae</taxon>
        <taxon>Halothermothrix</taxon>
    </lineage>
</organism>
<gene>
    <name evidence="1" type="primary">mtaD</name>
    <name type="ordered locus">Hore_10670</name>
</gene>
<keyword id="KW-0378">Hydrolase</keyword>
<keyword id="KW-0479">Metal-binding</keyword>
<keyword id="KW-1185">Reference proteome</keyword>
<keyword id="KW-0862">Zinc</keyword>
<name>MTAD_HALOH</name>
<dbReference type="EC" id="3.5.4.28" evidence="1"/>
<dbReference type="EC" id="3.5.4.31" evidence="1"/>
<dbReference type="EMBL" id="CP001098">
    <property type="protein sequence ID" value="ACL69822.1"/>
    <property type="molecule type" value="Genomic_DNA"/>
</dbReference>
<dbReference type="RefSeq" id="WP_012636007.1">
    <property type="nucleotide sequence ID" value="NC_011899.1"/>
</dbReference>
<dbReference type="SMR" id="B8CX03"/>
<dbReference type="STRING" id="373903.Hore_10670"/>
<dbReference type="KEGG" id="hor:Hore_10670"/>
<dbReference type="eggNOG" id="COG0402">
    <property type="taxonomic scope" value="Bacteria"/>
</dbReference>
<dbReference type="HOGENOM" id="CLU_012358_2_1_9"/>
<dbReference type="OrthoDB" id="9807210at2"/>
<dbReference type="Proteomes" id="UP000000719">
    <property type="component" value="Chromosome"/>
</dbReference>
<dbReference type="GO" id="GO:0090614">
    <property type="term" value="F:5'-methylthioadenosine deaminase activity"/>
    <property type="evidence" value="ECO:0007669"/>
    <property type="project" value="UniProtKB-UniRule"/>
</dbReference>
<dbReference type="GO" id="GO:0046872">
    <property type="term" value="F:metal ion binding"/>
    <property type="evidence" value="ECO:0007669"/>
    <property type="project" value="UniProtKB-KW"/>
</dbReference>
<dbReference type="GO" id="GO:0050270">
    <property type="term" value="F:S-adenosylhomocysteine deaminase activity"/>
    <property type="evidence" value="ECO:0007669"/>
    <property type="project" value="UniProtKB-UniRule"/>
</dbReference>
<dbReference type="CDD" id="cd01298">
    <property type="entry name" value="ATZ_TRZ_like"/>
    <property type="match status" value="1"/>
</dbReference>
<dbReference type="FunFam" id="3.20.20.140:FF:000014">
    <property type="entry name" value="5-methylthioadenosine/S-adenosylhomocysteine deaminase"/>
    <property type="match status" value="1"/>
</dbReference>
<dbReference type="Gene3D" id="3.20.20.140">
    <property type="entry name" value="Metal-dependent hydrolases"/>
    <property type="match status" value="1"/>
</dbReference>
<dbReference type="Gene3D" id="2.30.40.10">
    <property type="entry name" value="Urease, subunit C, domain 1"/>
    <property type="match status" value="1"/>
</dbReference>
<dbReference type="HAMAP" id="MF_01281">
    <property type="entry name" value="MTA_SAH_deamin"/>
    <property type="match status" value="1"/>
</dbReference>
<dbReference type="InterPro" id="IPR006680">
    <property type="entry name" value="Amidohydro-rel"/>
</dbReference>
<dbReference type="InterPro" id="IPR023512">
    <property type="entry name" value="Deaminase_MtaD/DadD"/>
</dbReference>
<dbReference type="InterPro" id="IPR011059">
    <property type="entry name" value="Metal-dep_hydrolase_composite"/>
</dbReference>
<dbReference type="InterPro" id="IPR032466">
    <property type="entry name" value="Metal_Hydrolase"/>
</dbReference>
<dbReference type="InterPro" id="IPR050287">
    <property type="entry name" value="MTA/SAH_deaminase"/>
</dbReference>
<dbReference type="PANTHER" id="PTHR43794:SF11">
    <property type="entry name" value="AMIDOHYDROLASE-RELATED DOMAIN-CONTAINING PROTEIN"/>
    <property type="match status" value="1"/>
</dbReference>
<dbReference type="PANTHER" id="PTHR43794">
    <property type="entry name" value="AMINOHYDROLASE SSNA-RELATED"/>
    <property type="match status" value="1"/>
</dbReference>
<dbReference type="Pfam" id="PF01979">
    <property type="entry name" value="Amidohydro_1"/>
    <property type="match status" value="1"/>
</dbReference>
<dbReference type="SUPFAM" id="SSF51338">
    <property type="entry name" value="Composite domain of metallo-dependent hydrolases"/>
    <property type="match status" value="1"/>
</dbReference>
<dbReference type="SUPFAM" id="SSF51556">
    <property type="entry name" value="Metallo-dependent hydrolases"/>
    <property type="match status" value="1"/>
</dbReference>
<feature type="chain" id="PRO_1000165241" description="5-methylthioadenosine/S-adenosylhomocysteine deaminase">
    <location>
        <begin position="1"/>
        <end position="431"/>
    </location>
</feature>
<feature type="binding site" evidence="1">
    <location>
        <position position="68"/>
    </location>
    <ligand>
        <name>Zn(2+)</name>
        <dbReference type="ChEBI" id="CHEBI:29105"/>
    </ligand>
</feature>
<feature type="binding site" evidence="1">
    <location>
        <position position="70"/>
    </location>
    <ligand>
        <name>Zn(2+)</name>
        <dbReference type="ChEBI" id="CHEBI:29105"/>
    </ligand>
</feature>
<feature type="binding site" evidence="1">
    <location>
        <position position="97"/>
    </location>
    <ligand>
        <name>substrate</name>
    </ligand>
</feature>
<feature type="binding site" evidence="1">
    <location>
        <position position="186"/>
    </location>
    <ligand>
        <name>substrate</name>
    </ligand>
</feature>
<feature type="binding site" evidence="1">
    <location>
        <position position="213"/>
    </location>
    <ligand>
        <name>Zn(2+)</name>
        <dbReference type="ChEBI" id="CHEBI:29105"/>
    </ligand>
</feature>
<feature type="binding site" evidence="1">
    <location>
        <position position="216"/>
    </location>
    <ligand>
        <name>substrate</name>
    </ligand>
</feature>
<feature type="binding site" evidence="1">
    <location>
        <position position="301"/>
    </location>
    <ligand>
        <name>substrate</name>
    </ligand>
</feature>
<feature type="binding site" evidence="1">
    <location>
        <position position="301"/>
    </location>
    <ligand>
        <name>Zn(2+)</name>
        <dbReference type="ChEBI" id="CHEBI:29105"/>
    </ligand>
</feature>
<proteinExistence type="inferred from homology"/>
<protein>
    <recommendedName>
        <fullName evidence="1">5-methylthioadenosine/S-adenosylhomocysteine deaminase</fullName>
        <shortName evidence="1">MTA/SAH deaminase</shortName>
        <ecNumber evidence="1">3.5.4.28</ecNumber>
        <ecNumber evidence="1">3.5.4.31</ecNumber>
    </recommendedName>
</protein>
<comment type="function">
    <text evidence="1">Catalyzes the deamination of 5-methylthioadenosine and S-adenosyl-L-homocysteine into 5-methylthioinosine and S-inosyl-L-homocysteine, respectively. Is also able to deaminate adenosine.</text>
</comment>
<comment type="catalytic activity">
    <reaction evidence="1">
        <text>S-adenosyl-L-homocysteine + H2O + H(+) = S-inosyl-L-homocysteine + NH4(+)</text>
        <dbReference type="Rhea" id="RHEA:20716"/>
        <dbReference type="ChEBI" id="CHEBI:15377"/>
        <dbReference type="ChEBI" id="CHEBI:15378"/>
        <dbReference type="ChEBI" id="CHEBI:28938"/>
        <dbReference type="ChEBI" id="CHEBI:57856"/>
        <dbReference type="ChEBI" id="CHEBI:57985"/>
        <dbReference type="EC" id="3.5.4.28"/>
    </reaction>
</comment>
<comment type="catalytic activity">
    <reaction evidence="1">
        <text>S-methyl-5'-thioadenosine + H2O + H(+) = S-methyl-5'-thioinosine + NH4(+)</text>
        <dbReference type="Rhea" id="RHEA:25025"/>
        <dbReference type="ChEBI" id="CHEBI:15377"/>
        <dbReference type="ChEBI" id="CHEBI:15378"/>
        <dbReference type="ChEBI" id="CHEBI:17509"/>
        <dbReference type="ChEBI" id="CHEBI:28938"/>
        <dbReference type="ChEBI" id="CHEBI:48595"/>
        <dbReference type="EC" id="3.5.4.31"/>
    </reaction>
</comment>
<comment type="cofactor">
    <cofactor evidence="1">
        <name>Zn(2+)</name>
        <dbReference type="ChEBI" id="CHEBI:29105"/>
    </cofactor>
    <text evidence="1">Binds 1 zinc ion per subunit.</text>
</comment>
<comment type="similarity">
    <text evidence="1">Belongs to the metallo-dependent hydrolases superfamily. MTA/SAH deaminase family.</text>
</comment>
<accession>B8CX03</accession>
<reference key="1">
    <citation type="journal article" date="2009" name="PLoS ONE">
        <title>Genome analysis of the anaerobic thermohalophilic bacterium Halothermothrix orenii.</title>
        <authorList>
            <person name="Mavromatis K."/>
            <person name="Ivanova N."/>
            <person name="Anderson I."/>
            <person name="Lykidis A."/>
            <person name="Hooper S.D."/>
            <person name="Sun H."/>
            <person name="Kunin V."/>
            <person name="Lapidus A."/>
            <person name="Hugenholtz P."/>
            <person name="Patel B."/>
            <person name="Kyrpides N.C."/>
        </authorList>
    </citation>
    <scope>NUCLEOTIDE SEQUENCE [LARGE SCALE GENOMIC DNA]</scope>
    <source>
        <strain>H 168 / OCM 544 / DSM 9562</strain>
    </source>
</reference>